<accession>C0Q872</accession>
<feature type="chain" id="PRO_1000187279" description="Glyoxylate/hydroxypyruvate reductase A">
    <location>
        <begin position="1"/>
        <end position="312"/>
    </location>
</feature>
<feature type="active site" evidence="1">
    <location>
        <position position="227"/>
    </location>
</feature>
<feature type="active site" description="Proton donor" evidence="1">
    <location>
        <position position="275"/>
    </location>
</feature>
<name>GHRA_SALPC</name>
<organism>
    <name type="scientific">Salmonella paratyphi C (strain RKS4594)</name>
    <dbReference type="NCBI Taxonomy" id="476213"/>
    <lineage>
        <taxon>Bacteria</taxon>
        <taxon>Pseudomonadati</taxon>
        <taxon>Pseudomonadota</taxon>
        <taxon>Gammaproteobacteria</taxon>
        <taxon>Enterobacterales</taxon>
        <taxon>Enterobacteriaceae</taxon>
        <taxon>Salmonella</taxon>
    </lineage>
</organism>
<dbReference type="EC" id="1.1.1.79" evidence="1"/>
<dbReference type="EC" id="1.1.1.81" evidence="1"/>
<dbReference type="EMBL" id="CP000857">
    <property type="protein sequence ID" value="ACN46717.1"/>
    <property type="molecule type" value="Genomic_DNA"/>
</dbReference>
<dbReference type="RefSeq" id="WP_000402556.1">
    <property type="nucleotide sequence ID" value="NC_012125.1"/>
</dbReference>
<dbReference type="SMR" id="C0Q872"/>
<dbReference type="KEGG" id="sei:SPC_2615"/>
<dbReference type="HOGENOM" id="CLU_019796_1_0_6"/>
<dbReference type="Proteomes" id="UP000001599">
    <property type="component" value="Chromosome"/>
</dbReference>
<dbReference type="GO" id="GO:0005737">
    <property type="term" value="C:cytoplasm"/>
    <property type="evidence" value="ECO:0007669"/>
    <property type="project" value="UniProtKB-SubCell"/>
</dbReference>
<dbReference type="GO" id="GO:0030267">
    <property type="term" value="F:glyoxylate reductase (NADPH) activity"/>
    <property type="evidence" value="ECO:0007669"/>
    <property type="project" value="UniProtKB-UniRule"/>
</dbReference>
<dbReference type="GO" id="GO:0008465">
    <property type="term" value="F:hydroxypyruvate reductase (NADH) activity"/>
    <property type="evidence" value="ECO:0007669"/>
    <property type="project" value="RHEA"/>
</dbReference>
<dbReference type="GO" id="GO:0120509">
    <property type="term" value="F:hydroxypyruvate reductase (NADPH) activity"/>
    <property type="evidence" value="ECO:0007669"/>
    <property type="project" value="RHEA"/>
</dbReference>
<dbReference type="GO" id="GO:0051287">
    <property type="term" value="F:NAD binding"/>
    <property type="evidence" value="ECO:0007669"/>
    <property type="project" value="InterPro"/>
</dbReference>
<dbReference type="CDD" id="cd12164">
    <property type="entry name" value="GDH_like_2"/>
    <property type="match status" value="1"/>
</dbReference>
<dbReference type="FunFam" id="3.40.50.720:FF:000110">
    <property type="entry name" value="Glyoxylate/hydroxypyruvate reductase A"/>
    <property type="match status" value="1"/>
</dbReference>
<dbReference type="Gene3D" id="3.40.50.720">
    <property type="entry name" value="NAD(P)-binding Rossmann-like Domain"/>
    <property type="match status" value="2"/>
</dbReference>
<dbReference type="HAMAP" id="MF_01666">
    <property type="entry name" value="2_Hacid_dh_C_GhrA"/>
    <property type="match status" value="1"/>
</dbReference>
<dbReference type="InterPro" id="IPR006140">
    <property type="entry name" value="D-isomer_DH_NAD-bd"/>
</dbReference>
<dbReference type="InterPro" id="IPR023514">
    <property type="entry name" value="GhrA_Enterobacterales"/>
</dbReference>
<dbReference type="InterPro" id="IPR036291">
    <property type="entry name" value="NAD(P)-bd_dom_sf"/>
</dbReference>
<dbReference type="NCBIfam" id="NF012013">
    <property type="entry name" value="PRK15469.1"/>
    <property type="match status" value="1"/>
</dbReference>
<dbReference type="PANTHER" id="PTHR43333">
    <property type="entry name" value="2-HACID_DH_C DOMAIN-CONTAINING PROTEIN"/>
    <property type="match status" value="1"/>
</dbReference>
<dbReference type="PANTHER" id="PTHR43333:SF1">
    <property type="entry name" value="D-ISOMER SPECIFIC 2-HYDROXYACID DEHYDROGENASE NAD-BINDING DOMAIN-CONTAINING PROTEIN"/>
    <property type="match status" value="1"/>
</dbReference>
<dbReference type="Pfam" id="PF02826">
    <property type="entry name" value="2-Hacid_dh_C"/>
    <property type="match status" value="1"/>
</dbReference>
<dbReference type="SUPFAM" id="SSF51735">
    <property type="entry name" value="NAD(P)-binding Rossmann-fold domains"/>
    <property type="match status" value="1"/>
</dbReference>
<reference key="1">
    <citation type="journal article" date="2009" name="PLoS ONE">
        <title>Salmonella paratyphi C: genetic divergence from Salmonella choleraesuis and pathogenic convergence with Salmonella typhi.</title>
        <authorList>
            <person name="Liu W.-Q."/>
            <person name="Feng Y."/>
            <person name="Wang Y."/>
            <person name="Zou Q.-H."/>
            <person name="Chen F."/>
            <person name="Guo J.-T."/>
            <person name="Peng Y.-H."/>
            <person name="Jin Y."/>
            <person name="Li Y.-G."/>
            <person name="Hu S.-N."/>
            <person name="Johnston R.N."/>
            <person name="Liu G.-R."/>
            <person name="Liu S.-L."/>
        </authorList>
    </citation>
    <scope>NUCLEOTIDE SEQUENCE [LARGE SCALE GENOMIC DNA]</scope>
    <source>
        <strain>RKS4594</strain>
    </source>
</reference>
<proteinExistence type="inferred from homology"/>
<keyword id="KW-0963">Cytoplasm</keyword>
<keyword id="KW-0520">NAD</keyword>
<keyword id="KW-0521">NADP</keyword>
<keyword id="KW-0560">Oxidoreductase</keyword>
<evidence type="ECO:0000255" key="1">
    <source>
        <dbReference type="HAMAP-Rule" id="MF_01666"/>
    </source>
</evidence>
<gene>
    <name evidence="1" type="primary">ghrA</name>
    <name type="ordered locus">SPC_2615</name>
</gene>
<comment type="function">
    <text evidence="1">Catalyzes the NADPH-dependent reduction of glyoxylate and hydroxypyruvate into glycolate and glycerate, respectively.</text>
</comment>
<comment type="catalytic activity">
    <reaction evidence="1">
        <text>glycolate + NADP(+) = glyoxylate + NADPH + H(+)</text>
        <dbReference type="Rhea" id="RHEA:10992"/>
        <dbReference type="ChEBI" id="CHEBI:15378"/>
        <dbReference type="ChEBI" id="CHEBI:29805"/>
        <dbReference type="ChEBI" id="CHEBI:36655"/>
        <dbReference type="ChEBI" id="CHEBI:57783"/>
        <dbReference type="ChEBI" id="CHEBI:58349"/>
        <dbReference type="EC" id="1.1.1.79"/>
    </reaction>
</comment>
<comment type="catalytic activity">
    <reaction evidence="1">
        <text>(R)-glycerate + NAD(+) = 3-hydroxypyruvate + NADH + H(+)</text>
        <dbReference type="Rhea" id="RHEA:17905"/>
        <dbReference type="ChEBI" id="CHEBI:15378"/>
        <dbReference type="ChEBI" id="CHEBI:16659"/>
        <dbReference type="ChEBI" id="CHEBI:17180"/>
        <dbReference type="ChEBI" id="CHEBI:57540"/>
        <dbReference type="ChEBI" id="CHEBI:57945"/>
        <dbReference type="EC" id="1.1.1.81"/>
    </reaction>
</comment>
<comment type="catalytic activity">
    <reaction evidence="1">
        <text>(R)-glycerate + NADP(+) = 3-hydroxypyruvate + NADPH + H(+)</text>
        <dbReference type="Rhea" id="RHEA:18657"/>
        <dbReference type="ChEBI" id="CHEBI:15378"/>
        <dbReference type="ChEBI" id="CHEBI:16659"/>
        <dbReference type="ChEBI" id="CHEBI:17180"/>
        <dbReference type="ChEBI" id="CHEBI:57783"/>
        <dbReference type="ChEBI" id="CHEBI:58349"/>
        <dbReference type="EC" id="1.1.1.81"/>
    </reaction>
</comment>
<comment type="subcellular location">
    <subcellularLocation>
        <location evidence="1">Cytoplasm</location>
    </subcellularLocation>
</comment>
<comment type="similarity">
    <text evidence="1">Belongs to the D-isomer specific 2-hydroxyacid dehydrogenase family. GhrA subfamily.</text>
</comment>
<protein>
    <recommendedName>
        <fullName evidence="1">Glyoxylate/hydroxypyruvate reductase A</fullName>
        <ecNumber evidence="1">1.1.1.79</ecNumber>
        <ecNumber evidence="1">1.1.1.81</ecNumber>
    </recommendedName>
    <alternativeName>
        <fullName evidence="1">2-ketoacid reductase</fullName>
    </alternativeName>
</protein>
<sequence length="312" mass="35034">MEIIFYHPTFNAAWWVNALEKALPHARVREWKVGDNNPADYALVWQPPVEMLAGRRLKAVFVLGAGVDAILSKLNAHPEMLDASIPLFRLEDTGMGLQMQEYAVSQVLHWFRRFDDYQALKNQALWKPLPEYTREEFSVGIMGAGVLGAKVAESLQAWGFPLRCWSRSRKSWPGVESYVGREELRAFLNQTRVLINLLPNTAQTVGIINSELLDQLPDGAYVLNLARGVHVQEADLLAALDSGKLKGAMLDVFSQEPLPQESPLWRHPRVAMTPHIAAVTRPAEAIDYISRTITQLEKGEPVTGQVDRARGY</sequence>